<keyword id="KW-0002">3D-structure</keyword>
<keyword id="KW-0010">Activator</keyword>
<keyword id="KW-0963">Cytoplasm</keyword>
<keyword id="KW-0903">Direct protein sequencing</keyword>
<keyword id="KW-0238">DNA-binding</keyword>
<keyword id="KW-0597">Phosphoprotein</keyword>
<keyword id="KW-1185">Reference proteome</keyword>
<keyword id="KW-0678">Repressor</keyword>
<keyword id="KW-0346">Stress response</keyword>
<keyword id="KW-0804">Transcription</keyword>
<keyword id="KW-0805">Transcription regulation</keyword>
<keyword id="KW-0902">Two-component regulatory system</keyword>
<evidence type="ECO:0000255" key="1">
    <source>
        <dbReference type="PROSITE-ProRule" id="PRU00169"/>
    </source>
</evidence>
<evidence type="ECO:0000255" key="2">
    <source>
        <dbReference type="PROSITE-ProRule" id="PRU01091"/>
    </source>
</evidence>
<evidence type="ECO:0000269" key="3">
    <source>
    </source>
</evidence>
<evidence type="ECO:0000269" key="4">
    <source>
    </source>
</evidence>
<evidence type="ECO:0000269" key="5">
    <source>
    </source>
</evidence>
<evidence type="ECO:0000269" key="6">
    <source>
    </source>
</evidence>
<evidence type="ECO:0000269" key="7">
    <source>
    </source>
</evidence>
<evidence type="ECO:0000269" key="8">
    <source>
    </source>
</evidence>
<evidence type="ECO:0000269" key="9">
    <source>
    </source>
</evidence>
<evidence type="ECO:0000269" key="10">
    <source>
    </source>
</evidence>
<evidence type="ECO:0000269" key="11">
    <source>
    </source>
</evidence>
<evidence type="ECO:0000269" key="12">
    <source>
    </source>
</evidence>
<evidence type="ECO:0000269" key="13">
    <source>
    </source>
</evidence>
<evidence type="ECO:0000269" key="14">
    <source>
    </source>
</evidence>
<evidence type="ECO:0000269" key="15">
    <source>
    </source>
</evidence>
<evidence type="ECO:0000269" key="16">
    <source>
    </source>
</evidence>
<evidence type="ECO:0000269" key="17">
    <source>
    </source>
</evidence>
<evidence type="ECO:0000269" key="18">
    <source>
    </source>
</evidence>
<evidence type="ECO:0000269" key="19">
    <source>
    </source>
</evidence>
<evidence type="ECO:0000269" key="20">
    <source>
    </source>
</evidence>
<evidence type="ECO:0000269" key="21">
    <source>
    </source>
</evidence>
<evidence type="ECO:0000269" key="22">
    <source>
    </source>
</evidence>
<evidence type="ECO:0000269" key="23">
    <source>
    </source>
</evidence>
<evidence type="ECO:0000269" key="24">
    <source>
    </source>
</evidence>
<evidence type="ECO:0000305" key="25"/>
<evidence type="ECO:0000305" key="26">
    <source>
    </source>
</evidence>
<evidence type="ECO:0000305" key="27">
    <source>
    </source>
</evidence>
<evidence type="ECO:0000305" key="28">
    <source>
    </source>
</evidence>
<evidence type="ECO:0007744" key="29">
    <source>
        <dbReference type="PDB" id="1ODD"/>
    </source>
</evidence>
<evidence type="ECO:0007744" key="30">
    <source>
        <dbReference type="PDB" id="1OPC"/>
    </source>
</evidence>
<evidence type="ECO:0007744" key="31">
    <source>
        <dbReference type="PDB" id="2JPB"/>
    </source>
</evidence>
<evidence type="ECO:0007829" key="32">
    <source>
        <dbReference type="PDB" id="1OPC"/>
    </source>
</evidence>
<evidence type="ECO:0007829" key="33">
    <source>
        <dbReference type="PDB" id="6LXN"/>
    </source>
</evidence>
<protein>
    <recommendedName>
        <fullName evidence="25">DNA-binding dual transcriptional regulator OmpR</fullName>
    </recommendedName>
    <alternativeName>
        <fullName evidence="25">Transcriptional regulatory protein OmpR</fullName>
    </alternativeName>
</protein>
<feature type="chain" id="PRO_0000081176" description="DNA-binding dual transcriptional regulator OmpR">
    <location>
        <begin position="1"/>
        <end position="239"/>
    </location>
</feature>
<feature type="domain" description="Response regulatory" evidence="1">
    <location>
        <begin position="6"/>
        <end position="120"/>
    </location>
</feature>
<feature type="DNA-binding region" description="OmpR/PhoB-type" evidence="2">
    <location>
        <begin position="135"/>
        <end position="234"/>
    </location>
</feature>
<feature type="modified residue" description="4-aspartylphosphate" evidence="1 24 26">
    <location>
        <position position="55"/>
    </location>
</feature>
<feature type="mutagenesis site" description="Loss of expression of OmpC and OmpF under low and high osmolarity." evidence="24">
    <original>DD</original>
    <variation>AA</variation>
    <location>
        <begin position="11"/>
        <end position="12"/>
    </location>
</feature>
<feature type="mutagenesis site" description="Reduced production of OmpF at low osmolarity, reduced OmpC produced at high osmolarity. Significantly decreased OmpR phosphorylation in vivo, no phosphorylation in vitro. Loss of expression of OmpC and OmpF under low and high osmolarity; when associated with A-55." evidence="24">
    <original>D</original>
    <variation>A</variation>
    <location>
        <position position="11"/>
    </location>
</feature>
<feature type="mutagenesis site" description="Wild-type production of OmpC and OmpF. No production of OmpC at low osmolarity, incomplete repression of OmpF, incomplete induction of OmpC at high osmolarity; when associated with A-55." evidence="24">
    <original>D</original>
    <variation>A</variation>
    <location>
        <position position="12"/>
    </location>
</feature>
<feature type="mutagenesis site" description="Very poorly phosphorylated in vitro, produces OmpF at 0% and 15% sucrose." evidence="5">
    <original>D</original>
    <variation>V</variation>
    <location>
        <position position="12"/>
    </location>
</feature>
<feature type="mutagenesis site" description="In ompR3; OmpF-, OmpC constitutive. Poorly dephosphorylated by EnvZ." evidence="10 17">
    <original>R</original>
    <variation>C</variation>
    <location>
        <position position="15"/>
    </location>
</feature>
<feature type="mutagenesis site" description="In ompR77; suppresses the OmpF- OmpC constitutive phenotype of envZ11, has no phenotype alone." evidence="21">
    <original>L</original>
    <variation>Q</variation>
    <location>
        <position position="16"/>
    </location>
</feature>
<feature type="mutagenesis site" description="Reduced production of OmpF at low osmolarity, greatly reduced OmpC produced at high osmolarity. Significantly decreased OmpR phosphorylation in vivo, no phosphorylation in vitro. Loss of expression of OmpC and OmpF under low and high osmolarity; when associated with A-11. No production of OmpC at low osmolarity, incomplete repression of OmpF, incomplete induction of OmpC at high osmolarity; when associated with A-12." evidence="24">
    <original>D</original>
    <variation>A</variation>
    <location>
        <position position="55"/>
    </location>
</feature>
<feature type="mutagenesis site" description="Not phosphorylated in vitro, no OmpC or OmpF under any growth conditions." evidence="5">
    <original>D</original>
    <variation>Q</variation>
    <location>
        <position position="55"/>
    </location>
</feature>
<feature type="mutagenesis site" description="In ompR4; OmpC expressed at low levels even in low osmolarity." evidence="17">
    <original>R</original>
    <variation>C</variation>
    <location>
        <position position="71"/>
    </location>
</feature>
<feature type="mutagenesis site" description="In ompR20; no OmpF expression, OmpC abnormally expressed at high osmlolarity." evidence="17">
    <original>R</original>
    <variation>C</variation>
    <location>
        <position position="150"/>
    </location>
</feature>
<feature type="mutagenesis site" description="In ompR1; OmpF- OmpC- phenotype." evidence="17">
    <location>
        <begin position="164"/>
        <end position="182"/>
    </location>
</feature>
<feature type="mutagenesis site" description="In ompR2; OmpF+ constitutive, OmpC-." evidence="17">
    <original>V</original>
    <variation>M</variation>
    <location>
        <position position="203"/>
    </location>
</feature>
<feature type="mutagenesis site" description="Loss of transcription activation." evidence="4">
    <original>R</original>
    <variation>A</variation>
    <location>
        <position position="207"/>
    </location>
</feature>
<feature type="mutagenesis site" description="Loss of transcription activation." evidence="4">
    <original>R</original>
    <variation>A</variation>
    <location>
        <position position="209"/>
    </location>
</feature>
<feature type="mutagenesis site" description="Loss of transcription activation, loss of DNA-binding, about 10% phosphorylation in vitro." evidence="4">
    <original>T</original>
    <variation>C</variation>
    <location>
        <position position="224"/>
    </location>
</feature>
<feature type="mutagenesis site" description="Wild-type transcription activation, decreased DNA-binding, about 40% phosphorylation in vitro." evidence="4">
    <original>V</original>
    <variation>C</variation>
    <location>
        <position position="225"/>
    </location>
</feature>
<feature type="mutagenesis site" description="Loss of transcription activation, loss of DNA-binding, about 20% phosphorylation in vitro." evidence="4">
    <original>W</original>
    <variation>A</variation>
    <variation>C</variation>
    <location>
        <position position="226"/>
    </location>
</feature>
<feature type="sequence conflict" description="In Ref. 1." evidence="25" ref="1">
    <original>I</original>
    <variation>N</variation>
    <location>
        <position position="7"/>
    </location>
</feature>
<feature type="strand" evidence="32">
    <location>
        <begin position="138"/>
        <end position="140"/>
    </location>
</feature>
<feature type="strand" evidence="32">
    <location>
        <begin position="143"/>
        <end position="146"/>
    </location>
</feature>
<feature type="turn" evidence="32">
    <location>
        <begin position="147"/>
        <end position="150"/>
    </location>
</feature>
<feature type="strand" evidence="32">
    <location>
        <begin position="151"/>
        <end position="154"/>
    </location>
</feature>
<feature type="strand" evidence="32">
    <location>
        <begin position="157"/>
        <end position="159"/>
    </location>
</feature>
<feature type="helix" evidence="32">
    <location>
        <begin position="163"/>
        <end position="174"/>
    </location>
</feature>
<feature type="helix" evidence="32">
    <location>
        <begin position="182"/>
        <end position="189"/>
    </location>
</feature>
<feature type="strand" evidence="32">
    <location>
        <begin position="192"/>
        <end position="194"/>
    </location>
</feature>
<feature type="helix" evidence="32">
    <location>
        <begin position="201"/>
        <end position="212"/>
    </location>
</feature>
<feature type="strand" evidence="33">
    <location>
        <begin position="216"/>
        <end position="218"/>
    </location>
</feature>
<feature type="strand" evidence="32">
    <location>
        <begin position="220"/>
        <end position="225"/>
    </location>
</feature>
<feature type="turn" evidence="32">
    <location>
        <begin position="226"/>
        <end position="228"/>
    </location>
</feature>
<feature type="strand" evidence="32">
    <location>
        <begin position="229"/>
        <end position="232"/>
    </location>
</feature>
<accession>P0AA16</accession>
<accession>O31133</accession>
<accession>P03025</accession>
<accession>P08981</accession>
<accession>P41405</accession>
<accession>Q2M770</accession>
<proteinExistence type="evidence at protein level"/>
<organism>
    <name type="scientific">Escherichia coli (strain K12)</name>
    <dbReference type="NCBI Taxonomy" id="83333"/>
    <lineage>
        <taxon>Bacteria</taxon>
        <taxon>Pseudomonadati</taxon>
        <taxon>Pseudomonadota</taxon>
        <taxon>Gammaproteobacteria</taxon>
        <taxon>Enterobacterales</taxon>
        <taxon>Enterobacteriaceae</taxon>
        <taxon>Escherichia</taxon>
    </lineage>
</organism>
<dbReference type="EMBL" id="J01656">
    <property type="protein sequence ID" value="AAA16241.1"/>
    <property type="molecule type" value="Unassigned_RNA"/>
</dbReference>
<dbReference type="EMBL" id="U18997">
    <property type="protein sequence ID" value="AAA58202.1"/>
    <property type="molecule type" value="Genomic_DNA"/>
</dbReference>
<dbReference type="EMBL" id="U00096">
    <property type="protein sequence ID" value="AAC76430.1"/>
    <property type="molecule type" value="Genomic_DNA"/>
</dbReference>
<dbReference type="EMBL" id="AP009048">
    <property type="protein sequence ID" value="BAE77886.1"/>
    <property type="molecule type" value="Genomic_DNA"/>
</dbReference>
<dbReference type="PIR" id="H65135">
    <property type="entry name" value="RGECOR"/>
</dbReference>
<dbReference type="RefSeq" id="NP_417864.1">
    <property type="nucleotide sequence ID" value="NC_000913.3"/>
</dbReference>
<dbReference type="RefSeq" id="WP_001157751.1">
    <property type="nucleotide sequence ID" value="NZ_STEB01000004.1"/>
</dbReference>
<dbReference type="PDB" id="1ODD">
    <property type="method" value="X-ray"/>
    <property type="resolution" value="2.20 A"/>
    <property type="chains" value="A=122-239"/>
</dbReference>
<dbReference type="PDB" id="1OPC">
    <property type="method" value="X-ray"/>
    <property type="resolution" value="1.95 A"/>
    <property type="chains" value="A=130-239"/>
</dbReference>
<dbReference type="PDB" id="2JPB">
    <property type="method" value="NMR"/>
    <property type="chains" value="A=136-239"/>
</dbReference>
<dbReference type="PDB" id="6LXL">
    <property type="method" value="X-ray"/>
    <property type="resolution" value="3.56 A"/>
    <property type="chains" value="A=136-239"/>
</dbReference>
<dbReference type="PDB" id="6LXM">
    <property type="method" value="X-ray"/>
    <property type="resolution" value="2.41 A"/>
    <property type="chains" value="A/B/C=136-239"/>
</dbReference>
<dbReference type="PDB" id="6LXN">
    <property type="method" value="X-ray"/>
    <property type="resolution" value="2.93 A"/>
    <property type="chains" value="A/B=136-239"/>
</dbReference>
<dbReference type="PDBsum" id="1ODD"/>
<dbReference type="PDBsum" id="1OPC"/>
<dbReference type="PDBsum" id="2JPB"/>
<dbReference type="PDBsum" id="6LXL"/>
<dbReference type="PDBsum" id="6LXM"/>
<dbReference type="PDBsum" id="6LXN"/>
<dbReference type="SMR" id="P0AA16"/>
<dbReference type="BioGRID" id="4261267">
    <property type="interactions" value="141"/>
</dbReference>
<dbReference type="BioGRID" id="852222">
    <property type="interactions" value="1"/>
</dbReference>
<dbReference type="DIP" id="DIP-31859N"/>
<dbReference type="FunCoup" id="P0AA16">
    <property type="interactions" value="554"/>
</dbReference>
<dbReference type="IntAct" id="P0AA16">
    <property type="interactions" value="10"/>
</dbReference>
<dbReference type="STRING" id="511145.b3405"/>
<dbReference type="jPOST" id="P0AA16"/>
<dbReference type="PaxDb" id="511145-b3405"/>
<dbReference type="EnsemblBacteria" id="AAC76430">
    <property type="protein sequence ID" value="AAC76430"/>
    <property type="gene ID" value="b3405"/>
</dbReference>
<dbReference type="GeneID" id="947913"/>
<dbReference type="GeneID" id="98390506"/>
<dbReference type="KEGG" id="ecj:JW3368"/>
<dbReference type="KEGG" id="eco:b3405"/>
<dbReference type="KEGG" id="ecoc:C3026_18475"/>
<dbReference type="PATRIC" id="fig|1411691.4.peg.3324"/>
<dbReference type="EchoBASE" id="EB0666"/>
<dbReference type="eggNOG" id="COG0745">
    <property type="taxonomic scope" value="Bacteria"/>
</dbReference>
<dbReference type="HOGENOM" id="CLU_000445_30_4_6"/>
<dbReference type="InParanoid" id="P0AA16"/>
<dbReference type="OMA" id="HSGFDVQ"/>
<dbReference type="OrthoDB" id="9802426at2"/>
<dbReference type="PhylomeDB" id="P0AA16"/>
<dbReference type="BioCyc" id="EcoCyc:OMPR-MONOMER"/>
<dbReference type="EvolutionaryTrace" id="P0AA16"/>
<dbReference type="PHI-base" id="PHI:11693"/>
<dbReference type="PHI-base" id="PHI:12186"/>
<dbReference type="PRO" id="PR:P0AA16"/>
<dbReference type="Proteomes" id="UP000000625">
    <property type="component" value="Chromosome"/>
</dbReference>
<dbReference type="CollecTF" id="EXPREG_00000810"/>
<dbReference type="GO" id="GO:0005829">
    <property type="term" value="C:cytosol"/>
    <property type="evidence" value="ECO:0000318"/>
    <property type="project" value="GO_Central"/>
</dbReference>
<dbReference type="GO" id="GO:0032993">
    <property type="term" value="C:protein-DNA complex"/>
    <property type="evidence" value="ECO:0000318"/>
    <property type="project" value="GO_Central"/>
</dbReference>
<dbReference type="GO" id="GO:0000156">
    <property type="term" value="F:phosphorelay response regulator activity"/>
    <property type="evidence" value="ECO:0000314"/>
    <property type="project" value="EcoliWiki"/>
</dbReference>
<dbReference type="GO" id="GO:0000976">
    <property type="term" value="F:transcription cis-regulatory region binding"/>
    <property type="evidence" value="ECO:0000314"/>
    <property type="project" value="UniProtKB"/>
</dbReference>
<dbReference type="GO" id="GO:0000160">
    <property type="term" value="P:phosphorelay signal transduction system"/>
    <property type="evidence" value="ECO:0000314"/>
    <property type="project" value="EcoliWiki"/>
</dbReference>
<dbReference type="GO" id="GO:0045893">
    <property type="term" value="P:positive regulation of DNA-templated transcription"/>
    <property type="evidence" value="ECO:0000314"/>
    <property type="project" value="EcoliWiki"/>
</dbReference>
<dbReference type="GO" id="GO:0006355">
    <property type="term" value="P:regulation of DNA-templated transcription"/>
    <property type="evidence" value="ECO:0000318"/>
    <property type="project" value="GO_Central"/>
</dbReference>
<dbReference type="CDD" id="cd00383">
    <property type="entry name" value="trans_reg_C"/>
    <property type="match status" value="1"/>
</dbReference>
<dbReference type="FunFam" id="1.10.10.10:FF:000023">
    <property type="entry name" value="Two-component response regulator OmpR"/>
    <property type="match status" value="1"/>
</dbReference>
<dbReference type="FunFam" id="3.40.50.2300:FF:000008">
    <property type="entry name" value="Two-component response regulator OmpR"/>
    <property type="match status" value="1"/>
</dbReference>
<dbReference type="Gene3D" id="3.40.50.2300">
    <property type="match status" value="1"/>
</dbReference>
<dbReference type="Gene3D" id="6.10.250.690">
    <property type="match status" value="1"/>
</dbReference>
<dbReference type="Gene3D" id="1.10.10.10">
    <property type="entry name" value="Winged helix-like DNA-binding domain superfamily/Winged helix DNA-binding domain"/>
    <property type="match status" value="1"/>
</dbReference>
<dbReference type="InterPro" id="IPR011006">
    <property type="entry name" value="CheY-like_superfamily"/>
</dbReference>
<dbReference type="InterPro" id="IPR001867">
    <property type="entry name" value="OmpR/PhoB-type_DNA-bd"/>
</dbReference>
<dbReference type="InterPro" id="IPR016032">
    <property type="entry name" value="Sig_transdc_resp-reg_C-effctor"/>
</dbReference>
<dbReference type="InterPro" id="IPR001789">
    <property type="entry name" value="Sig_transdc_resp-reg_receiver"/>
</dbReference>
<dbReference type="InterPro" id="IPR039420">
    <property type="entry name" value="WalR-like"/>
</dbReference>
<dbReference type="InterPro" id="IPR036388">
    <property type="entry name" value="WH-like_DNA-bd_sf"/>
</dbReference>
<dbReference type="NCBIfam" id="NF007005">
    <property type="entry name" value="PRK09468.1"/>
    <property type="match status" value="1"/>
</dbReference>
<dbReference type="PANTHER" id="PTHR48111:SF4">
    <property type="entry name" value="DNA-BINDING DUAL TRANSCRIPTIONAL REGULATOR OMPR"/>
    <property type="match status" value="1"/>
</dbReference>
<dbReference type="PANTHER" id="PTHR48111">
    <property type="entry name" value="REGULATOR OF RPOS"/>
    <property type="match status" value="1"/>
</dbReference>
<dbReference type="Pfam" id="PF00072">
    <property type="entry name" value="Response_reg"/>
    <property type="match status" value="1"/>
</dbReference>
<dbReference type="Pfam" id="PF00486">
    <property type="entry name" value="Trans_reg_C"/>
    <property type="match status" value="1"/>
</dbReference>
<dbReference type="SMART" id="SM00448">
    <property type="entry name" value="REC"/>
    <property type="match status" value="1"/>
</dbReference>
<dbReference type="SMART" id="SM00862">
    <property type="entry name" value="Trans_reg_C"/>
    <property type="match status" value="1"/>
</dbReference>
<dbReference type="SUPFAM" id="SSF46894">
    <property type="entry name" value="C-terminal effector domain of the bipartite response regulators"/>
    <property type="match status" value="1"/>
</dbReference>
<dbReference type="SUPFAM" id="SSF52172">
    <property type="entry name" value="CheY-like"/>
    <property type="match status" value="1"/>
</dbReference>
<dbReference type="PROSITE" id="PS51755">
    <property type="entry name" value="OMPR_PHOB"/>
    <property type="match status" value="1"/>
</dbReference>
<dbReference type="PROSITE" id="PS50110">
    <property type="entry name" value="RESPONSE_REGULATORY"/>
    <property type="match status" value="1"/>
</dbReference>
<sequence length="239" mass="27354">MQENYKILVVDDDMRLRALLERYLTEQGFQVRSVANAEQMDRLLTRESFHLMVLDLMLPGEDGLSICRRLRSQSNPMPIIMVTAKGEEVDRIVGLEIGADDYIPKPFNPRELLARIRAVLRRQANELPGAPSQEEAVIAFGKFKLNLGTREMFREDEPMPLTSGEFAVLKALVSHPREPLSRDKLMNLARGREYSAMERSIDVQISRLRRMVEEDPAHPRYIQTVWGLGYVFVPDGSKA</sequence>
<gene>
    <name type="primary">ompR</name>
    <name type="synonym">kmt</name>
    <name type="synonym">ompB</name>
    <name type="ordered locus">b3405</name>
    <name type="ordered locus">JW3368</name>
</gene>
<name>OMPR_ECOLI</name>
<comment type="function">
    <text evidence="3 4 6 7 8 9 10 11 12 14 15 17 18 19 20 21 23 24">Member of the two-component regulatory system EnvZ/OmpR involved in osmoregulation (particularly of genes ompF and ompC) as well as other genes (PubMed:3010044, PubMed:3536870). Plays a central role in both acid and osmotic stress responses (PubMed:28526842, PubMed:30524381). Binds AT-rich DNA (PubMed:10633113). Binds to the promoter of both ompC and ompF; at low osmolarity it activates ompF transcription, while at high osmolarity it represses ompF and activates ompC transcription (PubMed:2403550, PubMed:2557454, PubMed:3023382, PubMed:3533941, PubMed:7592927). Involved in acid stress response; this requires EnvZ but not OmpR phosphorylation (PubMed:29138484). Phosphorylated by EnvZ; this stimulates OmpR's DNA-binding ability (PubMed:2558046, PubMed:2656684, PubMed:2668281, PubMed:2668953, PubMed:2674113, PubMed:7934854). Is also dephosphorylated by EnvZ (PubMed:2558046, PubMed:2668281, PubMed:7934854). A single OmpR protein can bind to DNA; OmpR dimers can form on the DNA in either direction, suggesting that interactions between the 2 DNA-binding domains are weak or absent (PubMed:18195018).</text>
</comment>
<comment type="activity regulation">
    <text evidence="13">In the presence of 0.2 M NaCl, 2.0 mM sodium cholate (bile salts) decreases expression from the ompC promoter; how this is mediated is unknown.</text>
</comment>
<comment type="subunit">
    <text evidence="15 23">Monomer in solution. Up to 8 OmpR molecules bind to the ompF promoter; each 20 base pair (bp) region of the promoter binds 2 molecules of OmpR, which may only interact upon DNA-binding. Binds to direct repeats in the 20 bp DNA fragments (PubMed:7592927). At pH 7.1 protein is monomeric, as the pH decreases to 6.5 and 6.1 about 70% is dimeric, which is poorly phosphorylated. DNA-binding ability increases at acidic pH (PubMed:29138484).</text>
</comment>
<comment type="interaction">
    <interactant intactId="EBI-369514">
        <id>P0AA16</id>
    </interactant>
    <interactant intactId="EBI-1121750">
        <id>P0AEJ4</id>
        <label>envZ</label>
    </interactant>
    <organismsDiffer>false</organismsDiffer>
    <experiments>2</experiments>
</comment>
<comment type="subcellular location">
    <subcellularLocation>
        <location evidence="20">Cytoplasm</location>
    </subcellularLocation>
</comment>
<comment type="induction">
    <text evidence="19 27 28">1.8-fold induced by growth in 15% sucrose, no change upon growth at pH 5.6 (PubMed:30524381). Part of the ompR-envZ operon (Probable).</text>
</comment>
<comment type="domain">
    <text evidence="22">Composed of an N-terminal response regulatory domain joined by a flexible linker to the C-terminal DNA-binding domain; the relative conformation of the 2 domains alters upon phosphorylation.</text>
</comment>
<comment type="PTM">
    <text evidence="5 8 9 10 12 24 26">Phosphorylated by EnvZ (PubMed:2277041, PubMed:2656684, PubMed:2668281, PubMed:2674113, PubMed:7934854). Asp-55 is the primary phosphate acceptor site, but Asp-11 may also serve as a phosphorylation site, particularly in the absence of Asp-55 (Probable) (PubMed:7934854). Phosphorylation stimulates the DNA-binding ability of OmpR (PubMed:2674113). Dephosphorylated by EnvZ in the presence of ATP (PubMed:2558046, PubMed:2668281, PubMed:7934854).</text>
</comment>
<comment type="mass spectrometry" mass="27355.0" method="Electrospray" evidence="22"/>
<comment type="mass spectrometry" mass="27438.0" method="Electrospray" evidence="22">
    <text>The (mono)phosphorylated form.</text>
</comment>
<comment type="disruption phenotype">
    <text evidence="5 15 24">Loss of expression of OmpC and OmpF under low and high osmolarity (PubMed:7934854). Deletion of both ompR and envZ leads to loss of both OmpC and OmpF expression under 0% and 15% sucrose (PubMed:2277041). Cells no longer reduce their internal pH in response to external acid stress (PubMed:29138484).</text>
</comment>
<comment type="miscellaneous">
    <text evidence="8">Cross talk between this and the Che and Ntr two-component systems can occur at least in vitro.</text>
</comment>
<comment type="sequence caution" evidence="16 17">
    <conflict type="frameshift" ref="1"/>
</comment>
<reference key="1">
    <citation type="journal article" date="1982" name="J. Biol. Chem.">
        <title>Osmoregulation of gene expression. I. DNA sequence of the ompR gene of the ompB operon of Escherichia coli and characterization of its gene product.</title>
        <authorList>
            <person name="Wurtzel E.T."/>
            <person name="Chou M.-Y."/>
            <person name="Inouye M."/>
        </authorList>
    </citation>
    <scope>NUCLEOTIDE SEQUENCE [GENOMIC DNA]</scope>
    <scope>OPERON STRUCTURE</scope>
</reference>
<reference key="2">
    <citation type="journal article" date="1986" name="Mol. Gen. Genet.">
        <title>Molecular analysis of mutant ompR genes exhibiting different phenotypes as to osmoregulation of the ompF and ompC genes of Escherichia coli.</title>
        <authorList>
            <person name="Nara F."/>
            <person name="Matsuyama S."/>
            <person name="Mizuno T."/>
            <person name="Mizushima S."/>
        </authorList>
    </citation>
    <scope>NUCLEOTIDE SEQUENCE [GENOMIC DNA]</scope>
    <scope>SEQUENCE REVISION TO 7 AND C-TERMINUS</scope>
    <scope>MUTAGENESIS OF ARG-15; ARG-71; ARG-150; 164-GLY--ARG-182 AND VAL-203</scope>
    <source>
        <strain>K12</strain>
    </source>
</reference>
<reference key="3">
    <citation type="journal article" date="1985" name="J. Bacteriol.">
        <title>Primary characterization of the protein products of the Escherichia coli ompB locus: structure and regulation of synthesis of the OmpR and EnvZ proteins.</title>
        <authorList>
            <person name="Comeau D.E."/>
            <person name="Ikenaka K."/>
            <person name="Tsung K."/>
            <person name="Inouye M."/>
        </authorList>
    </citation>
    <scope>NUCLEOTIDE SEQUENCE [GENOMIC DNA]</scope>
    <scope>SEQUENCE REVISION TO 7 AND C-TERMINUS</scope>
    <source>
        <strain>K12</strain>
    </source>
</reference>
<reference key="4">
    <citation type="journal article" date="1997" name="Science">
        <title>The complete genome sequence of Escherichia coli K-12.</title>
        <authorList>
            <person name="Blattner F.R."/>
            <person name="Plunkett G. III"/>
            <person name="Bloch C.A."/>
            <person name="Perna N.T."/>
            <person name="Burland V."/>
            <person name="Riley M."/>
            <person name="Collado-Vides J."/>
            <person name="Glasner J.D."/>
            <person name="Rode C.K."/>
            <person name="Mayhew G.F."/>
            <person name="Gregor J."/>
            <person name="Davis N.W."/>
            <person name="Kirkpatrick H.A."/>
            <person name="Goeden M.A."/>
            <person name="Rose D.J."/>
            <person name="Mau B."/>
            <person name="Shao Y."/>
        </authorList>
    </citation>
    <scope>NUCLEOTIDE SEQUENCE [LARGE SCALE GENOMIC DNA]</scope>
    <source>
        <strain>K12 / MG1655 / ATCC 47076</strain>
    </source>
</reference>
<reference key="5">
    <citation type="journal article" date="2006" name="Mol. Syst. Biol.">
        <title>Highly accurate genome sequences of Escherichia coli K-12 strains MG1655 and W3110.</title>
        <authorList>
            <person name="Hayashi K."/>
            <person name="Morooka N."/>
            <person name="Yamamoto Y."/>
            <person name="Fujita K."/>
            <person name="Isono K."/>
            <person name="Choi S."/>
            <person name="Ohtsubo E."/>
            <person name="Baba T."/>
            <person name="Wanner B.L."/>
            <person name="Mori H."/>
            <person name="Horiuchi T."/>
        </authorList>
    </citation>
    <scope>NUCLEOTIDE SEQUENCE [LARGE SCALE GENOMIC DNA]</scope>
    <source>
        <strain>K12 / W3110 / ATCC 27325 / DSM 5911</strain>
    </source>
</reference>
<reference key="6">
    <citation type="journal article" date="1986" name="J. Biol. Chem.">
        <title>Purification and characterization of the OmpR protein, a positive regulator involved in osmoregulatory expression of the ompF and ompC genes in Escherichia coli.</title>
        <authorList>
            <person name="Jo Y.L."/>
            <person name="Nara F."/>
            <person name="Ichihara S."/>
            <person name="Mizuno T."/>
            <person name="Mizushima S."/>
        </authorList>
    </citation>
    <scope>PROTEIN SEQUENCE OF 1-5</scope>
    <scope>FUNCTION</scope>
    <scope>SUBCELLULAR LOCATION</scope>
    <scope>DNA-BINDING</scope>
</reference>
<reference key="7">
    <citation type="journal article" date="1995" name="Proc. Natl. Acad. Sci. U.S.A.">
        <title>Phosphorylation-dependent conformational changes in OmpR, an osmoregulatory DNA-binding protein of Escherichia coli.</title>
        <authorList>
            <person name="Kenney L.J."/>
            <person name="Bauer M.D."/>
            <person name="Silhavy T.J."/>
        </authorList>
    </citation>
    <scope>PROTEIN SEQUENCE OF 1-5; 193-197 AND 200-204</scope>
    <scope>DOMAIN</scope>
    <scope>PHOSPHORYLATION</scope>
    <scope>MASS SPECTROMETRY</scope>
</reference>
<reference key="8">
    <citation type="journal article" date="1993" name="Mol. Microbiol.">
        <title>Identification of a phosphorylation site and functional analysis of conserved aspartic acid residues of OmpR, a transcriptional activator for ompF and ompC in Escherichia coli.</title>
        <authorList>
            <person name="Delgado J."/>
            <person name="Forst S."/>
            <person name="Harlocker S."/>
            <person name="Inouye M."/>
        </authorList>
    </citation>
    <scope>PROTEIN SEQUENCE OF 47-58</scope>
    <scope>PHOSPHORYLATION AND DEPHOSPHORYLATION BY ENVZ</scope>
    <scope>PHOSPHORYLATION AT ASP-55</scope>
    <scope>DISRUPTION PHENOTYPE</scope>
    <scope>MUTAGENESIS OF 11-ASP-ASP-12; ASP-11; ASP-12 AND ASP-55</scope>
</reference>
<reference key="9">
    <citation type="journal article" date="1986" name="J. Biol. Chem.">
        <title>Interaction of a transcriptional activator, OmpR, with reciprocally osmoregulated genes, ompF and ompC, of Escherichia coli.</title>
        <authorList>
            <person name="Norioka S."/>
            <person name="Ramakrishnan G."/>
            <person name="Ikenaka K."/>
            <person name="Inouye M."/>
        </authorList>
    </citation>
    <scope>FUNCTION AS A TRANSCRIPTIONAL REGULATOR</scope>
    <scope>DNA-BINDING</scope>
</reference>
<reference key="10">
    <citation type="journal article" date="1986" name="J. Bacteriol.">
        <title>Interaction between two regulatory proteins in osmoregulatory expression of ompF and ompC genes in Escherichia coli: a novel ompR mutation suppresses pleiotropic defects caused by an envZ mutation.</title>
        <authorList>
            <person name="Matsuyama S."/>
            <person name="Mizuno T."/>
            <person name="Mizushima S."/>
        </authorList>
    </citation>
    <scope>FUNCTION</scope>
    <scope>MUTAGENESIS OF LEU-16</scope>
</reference>
<reference key="11">
    <citation type="journal article" date="1989" name="Genes Dev.">
        <title>Phosphorylation and dephosphorylation of a bacterial transcriptional activator by a transmembrane receptor.</title>
        <authorList>
            <person name="Igo M.M."/>
            <person name="Ninfa A.J."/>
            <person name="Stock J.B."/>
            <person name="Silhavy T.J."/>
        </authorList>
    </citation>
    <scope>PHOSPHORYLATION AND DEPHOSPHORYLATION BY ENVZ</scope>
    <scope>CROSSTALK BETWEEN TWO-COMPONENT SYSTEMS</scope>
</reference>
<reference key="12">
    <citation type="journal article" date="1989" name="J. Biochem.">
        <title>Phosphorylation of a bacterial activator protein, OmpR, by a protein kinase, EnvZ, results in stimulation of its DNA-binding ability.</title>
        <authorList>
            <person name="Aiba H."/>
            <person name="Nakasai F."/>
            <person name="Mizushima S."/>
            <person name="Mizuno T."/>
        </authorList>
    </citation>
    <scope>FUNCTION</scope>
    <scope>PHOSPHORYLATION</scope>
    <scope>DNA-BINDING</scope>
</reference>
<reference key="13">
    <citation type="journal article" date="1989" name="J. Biol. Chem.">
        <title>Transfer of phosphoryl group between two regulatory proteins involved in osmoregulatory expression of the ompF and ompC genes in Escherichia coli.</title>
        <authorList>
            <person name="Aiba H."/>
            <person name="Mizuno T."/>
            <person name="Mizushima S."/>
        </authorList>
    </citation>
    <scope>PHOSPHORYLATION BY ENVZ</scope>
</reference>
<reference key="14">
    <citation type="journal article" date="1989" name="J. Biol. Chem.">
        <title>Evidence for the physiological importance of the phosphotransfer between the two regulatory components, EnvZ and OmpR, in osmoregulation in Escherichia coli.</title>
        <authorList>
            <person name="Aiba H."/>
            <person name="Nakasai F."/>
            <person name="Mizushima S."/>
            <person name="Mizuno T."/>
        </authorList>
    </citation>
    <scope>PHOSPHORYLATION AND DEPHOSPHORYLATION BY ENVZ</scope>
    <scope>MUTAGENESIS OF ARG-15 AND LEU-16</scope>
</reference>
<reference key="15">
    <citation type="journal article" date="1989" name="J. Mol. Biol.">
        <title>Genetic analysis of the switch that controls porin gene expression in Escherichia coli K-12.</title>
        <authorList>
            <person name="Slauch J.M."/>
            <person name="Silhavy T.J."/>
        </authorList>
    </citation>
    <scope>FUNCTION AS A TRANSCRIPTIONAL ACTIVATOR AND REPRESSOR FOR OMPF</scope>
</reference>
<reference key="16">
    <citation type="journal article" date="1989" name="Proc. Natl. Acad. Sci. U.S.A.">
        <title>Phosphorylation of OmpR by the osmosensor EnvZ modulates expression of the ompF and ompC genes in Escherichia coli.</title>
        <authorList>
            <person name="Forst S."/>
            <person name="Delgado J."/>
            <person name="Inouye M."/>
        </authorList>
    </citation>
    <scope>FUNCTION</scope>
    <scope>PHOSPHORYLATION BY ENVZ</scope>
</reference>
<reference key="17">
    <citation type="journal article" date="1990" name="J. Bacteriol.">
        <title>Evidence for multiple OmpR-binding sites in the upstream activation sequence of the ompC promoter in Escherichia coli: a single OmpR-binding site is capable of activating the promoter.</title>
        <authorList>
            <person name="Maeda S."/>
            <person name="Mizuno T."/>
        </authorList>
    </citation>
    <scope>FUNCTION AS A TRANSCRIPTIONAL ACTIVATOR FOR OMPC</scope>
    <scope>DNA-BINDING</scope>
</reference>
<reference key="18">
    <citation type="journal article" date="1990" name="J. Biochem.">
        <title>Transmembrane signal transduction and osmoregulation in Escherichia coli: I. Analysis by site-directed mutagenesis of the amino acid residues involved in phosphotransfer between the two regulatory components, EnvZ and OmpR.</title>
        <authorList>
            <person name="Kanamaru K."/>
            <person name="Aiba H."/>
            <person name="Mizuno T."/>
        </authorList>
    </citation>
    <scope>PHOSPHORYLATION AND DEPHOSPHORYLATION BY ENVZ</scope>
    <scope>PROBABLE PHOSPHORYLATION AT ASP-55</scope>
    <scope>DISRUPTION PHENOTYPE</scope>
    <scope>MUTAGENESIS OF ASP-12 AND ASP-55</scope>
</reference>
<reference key="19">
    <citation type="journal article" date="1995" name="J. Biol. Chem.">
        <title>Tandem binding of six OmpR proteins to the ompF upstream regulatory sequence of Escherichia coli.</title>
        <authorList>
            <person name="Harlocker S.L."/>
            <person name="Bergstrom L."/>
            <person name="Inouye M."/>
        </authorList>
    </citation>
    <scope>SUBUNIT</scope>
    <scope>DNA-BINDING</scope>
</reference>
<reference key="20">
    <citation type="journal article" date="2000" name="J. Bacteriol.">
        <title>OmpR regulates the two-component system SsrA-ssrB in Salmonella pathogenicity island 2.</title>
        <authorList>
            <person name="Lee A.K."/>
            <person name="Detweiler C.S."/>
            <person name="Falkow S."/>
        </authorList>
    </citation>
    <scope>FUNCTION</scope>
</reference>
<reference key="21">
    <citation type="journal article" date="2017" name="Sci. Rep.">
        <title>Revealing genome-scale transcriptional regulatory landscape of OmpR highlights its expanded regulatory roles under osmotic stress in Escherichia coli K-12 MG1655.</title>
        <authorList>
            <person name="Seo S.W."/>
            <person name="Gao Y."/>
            <person name="Kim D."/>
            <person name="Szubin R."/>
            <person name="Yang J."/>
            <person name="Cho B.K."/>
            <person name="Palsson B.O."/>
        </authorList>
    </citation>
    <scope>REGULON</scope>
    <source>
        <strain>K12 / MG1655 / ATCC 47076</strain>
    </source>
</reference>
<reference key="22">
    <citation type="journal article" date="2017" name="Nat. Commun.">
        <title>Non-canonical activation of OmpR drives acid and osmotic stress responses in single bacterial cells.</title>
        <authorList>
            <person name="Chakraborty S."/>
            <person name="Winardhi R.S."/>
            <person name="Morgan L.K."/>
            <person name="Yan J."/>
            <person name="Kenney L.J."/>
        </authorList>
    </citation>
    <scope>FUNCTION IN ACID STRESS</scope>
    <scope>SUBUNIT</scope>
    <scope>DISRUPTION PHENOTYPE</scope>
    <scope>DNA-BINDING</scope>
    <source>
        <strain>K12 / MG1655 / ATCC 47076</strain>
    </source>
</reference>
<reference key="23">
    <citation type="journal article" date="2018" name="Front. Microbiol.">
        <title>A new role of OmpR in acid and osmotic stress in Salmonella and E. coli.</title>
        <authorList>
            <person name="Chakraborty S."/>
            <person name="Kenney L.J."/>
        </authorList>
    </citation>
    <scope>REGULON</scope>
    <scope>INDUCTION</scope>
    <source>
        <strain>K12 / MG1655 / ATCC 47076</strain>
    </source>
</reference>
<reference key="24">
    <citation type="journal article" date="2017" name="FEBS Lett.">
        <title>Crystal structure of the EnvZ periplasmic domain with CHAPS.</title>
        <authorList>
            <person name="Hwang E."/>
            <person name="Cheong H.K."/>
            <person name="Kim S.Y."/>
            <person name="Kwon O."/>
            <person name="Blain K.Y."/>
            <person name="Choe S."/>
            <person name="Yeo K.J."/>
            <person name="Jung Y.W."/>
            <person name="Jeon Y.H."/>
            <person name="Cheong C."/>
        </authorList>
    </citation>
    <scope>ACTIVITY REGULATION</scope>
    <source>
        <strain>K12 / MC4100</strain>
    </source>
</reference>
<reference evidence="29" key="25">
    <citation type="journal article" date="1997" name="Nat. Struct. Biol.">
        <title>Escherichia coli positive regulator OmpR has a large loop structure at the putative RNA polymerase interaction site.</title>
        <authorList>
            <person name="Kondo H."/>
            <person name="Nakagawa A."/>
            <person name="Nishihira J."/>
            <person name="Nishimura Y."/>
            <person name="Mizuno T."/>
            <person name="Tanaka I."/>
        </authorList>
    </citation>
    <scope>X-RAY CRYSTALLOGRAPHY (2.20 ANGSTROMS) OF 122-239</scope>
</reference>
<reference evidence="30" key="26">
    <citation type="journal article" date="1997" name="Structure">
        <title>The DNA-binding domain of OmpR: crystal structures of a winged helix transcription factor.</title>
        <authorList>
            <person name="Martinez-Hackert E."/>
            <person name="Stock A.M."/>
        </authorList>
    </citation>
    <scope>X-RAY CRYSTALLOGRAPHY (1.95 ANGSTROMS) OF 130-239</scope>
</reference>
<reference evidence="31" key="27">
    <citation type="journal article" date="2008" name="J. Biol. Chem.">
        <title>Amino acids important for DNA recognition by the response regulator OmpR.</title>
        <authorList>
            <person name="Rhee J.E."/>
            <person name="Sheng W."/>
            <person name="Morgan L.K."/>
            <person name="Nolet R."/>
            <person name="Liao X."/>
            <person name="Kenney L.J."/>
        </authorList>
    </citation>
    <scope>STRUCTURE BY NMR OF 136-239</scope>
    <scope>SUBUNIT</scope>
    <scope>MUTAGENESIS OF ARG-207; ARG-209; THR-224; VAL-225 AND TRP-226</scope>
    <scope>DNA-BINDING</scope>
</reference>